<keyword id="KW-0025">Alternative splicing</keyword>
<keyword id="KW-1185">Reference proteome</keyword>
<proteinExistence type="evidence at transcript level"/>
<feature type="chain" id="PRO_0000424011" description="T-complex protein 11-like X-linked protein 1">
    <location>
        <begin position="1"/>
        <end position="502"/>
    </location>
</feature>
<feature type="region of interest" description="Disordered" evidence="1">
    <location>
        <begin position="1"/>
        <end position="36"/>
    </location>
</feature>
<feature type="splice variant" id="VSP_062037" description="In isoform 2.">
    <original>GNNSEPPSPTMVLYQGYLNLLLWDLENVEFPETL</original>
    <variation>DSADGQNPAPGTGIPVAPVNCPGLSLASGQKLLW</variation>
    <location>
        <begin position="279"/>
        <end position="312"/>
    </location>
</feature>
<feature type="splice variant" id="VSP_062038" description="In isoform 2.">
    <location>
        <begin position="313"/>
        <end position="502"/>
    </location>
</feature>
<feature type="sequence conflict" description="In Ref. 1; BAG64186." evidence="2" ref="1">
    <original>V</original>
    <variation>A</variation>
    <location>
        <position position="271"/>
    </location>
</feature>
<protein>
    <recommendedName>
        <fullName evidence="2">T-complex protein 11-like X-linked protein 1</fullName>
    </recommendedName>
</protein>
<evidence type="ECO:0000256" key="1">
    <source>
        <dbReference type="SAM" id="MobiDB-lite"/>
    </source>
</evidence>
<evidence type="ECO:0000305" key="2"/>
<evidence type="ECO:0000312" key="3">
    <source>
        <dbReference type="HGNC" id="HGNC:48369"/>
    </source>
</evidence>
<organism>
    <name type="scientific">Homo sapiens</name>
    <name type="common">Human</name>
    <dbReference type="NCBI Taxonomy" id="9606"/>
    <lineage>
        <taxon>Eukaryota</taxon>
        <taxon>Metazoa</taxon>
        <taxon>Chordata</taxon>
        <taxon>Craniata</taxon>
        <taxon>Vertebrata</taxon>
        <taxon>Euteleostomi</taxon>
        <taxon>Mammalia</taxon>
        <taxon>Eutheria</taxon>
        <taxon>Euarchontoglires</taxon>
        <taxon>Primates</taxon>
        <taxon>Haplorrhini</taxon>
        <taxon>Catarrhini</taxon>
        <taxon>Hominidae</taxon>
        <taxon>Homo</taxon>
    </lineage>
</organism>
<name>T11X1_HUMAN</name>
<gene>
    <name evidence="3" type="primary">TCP11X1</name>
</gene>
<reference key="1">
    <citation type="journal article" date="2004" name="Nat. Genet.">
        <title>Complete sequencing and characterization of 21,243 full-length human cDNAs.</title>
        <authorList>
            <person name="Ota T."/>
            <person name="Suzuki Y."/>
            <person name="Nishikawa T."/>
            <person name="Otsuki T."/>
            <person name="Sugiyama T."/>
            <person name="Irie R."/>
            <person name="Wakamatsu A."/>
            <person name="Hayashi K."/>
            <person name="Sato H."/>
            <person name="Nagai K."/>
            <person name="Kimura K."/>
            <person name="Makita H."/>
            <person name="Sekine M."/>
            <person name="Obayashi M."/>
            <person name="Nishi T."/>
            <person name="Shibahara T."/>
            <person name="Tanaka T."/>
            <person name="Ishii S."/>
            <person name="Yamamoto J."/>
            <person name="Saito K."/>
            <person name="Kawai Y."/>
            <person name="Isono Y."/>
            <person name="Nakamura Y."/>
            <person name="Nagahari K."/>
            <person name="Murakami K."/>
            <person name="Yasuda T."/>
            <person name="Iwayanagi T."/>
            <person name="Wagatsuma M."/>
            <person name="Shiratori A."/>
            <person name="Sudo H."/>
            <person name="Hosoiri T."/>
            <person name="Kaku Y."/>
            <person name="Kodaira H."/>
            <person name="Kondo H."/>
            <person name="Sugawara M."/>
            <person name="Takahashi M."/>
            <person name="Kanda K."/>
            <person name="Yokoi T."/>
            <person name="Furuya T."/>
            <person name="Kikkawa E."/>
            <person name="Omura Y."/>
            <person name="Abe K."/>
            <person name="Kamihara K."/>
            <person name="Katsuta N."/>
            <person name="Sato K."/>
            <person name="Tanikawa M."/>
            <person name="Yamazaki M."/>
            <person name="Ninomiya K."/>
            <person name="Ishibashi T."/>
            <person name="Yamashita H."/>
            <person name="Murakawa K."/>
            <person name="Fujimori K."/>
            <person name="Tanai H."/>
            <person name="Kimata M."/>
            <person name="Watanabe M."/>
            <person name="Hiraoka S."/>
            <person name="Chiba Y."/>
            <person name="Ishida S."/>
            <person name="Ono Y."/>
            <person name="Takiguchi S."/>
            <person name="Watanabe S."/>
            <person name="Yosida M."/>
            <person name="Hotuta T."/>
            <person name="Kusano J."/>
            <person name="Kanehori K."/>
            <person name="Takahashi-Fujii A."/>
            <person name="Hara H."/>
            <person name="Tanase T.-O."/>
            <person name="Nomura Y."/>
            <person name="Togiya S."/>
            <person name="Komai F."/>
            <person name="Hara R."/>
            <person name="Takeuchi K."/>
            <person name="Arita M."/>
            <person name="Imose N."/>
            <person name="Musashino K."/>
            <person name="Yuuki H."/>
            <person name="Oshima A."/>
            <person name="Sasaki N."/>
            <person name="Aotsuka S."/>
            <person name="Yoshikawa Y."/>
            <person name="Matsunawa H."/>
            <person name="Ichihara T."/>
            <person name="Shiohata N."/>
            <person name="Sano S."/>
            <person name="Moriya S."/>
            <person name="Momiyama H."/>
            <person name="Satoh N."/>
            <person name="Takami S."/>
            <person name="Terashima Y."/>
            <person name="Suzuki O."/>
            <person name="Nakagawa S."/>
            <person name="Senoh A."/>
            <person name="Mizoguchi H."/>
            <person name="Goto Y."/>
            <person name="Shimizu F."/>
            <person name="Wakebe H."/>
            <person name="Hishigaki H."/>
            <person name="Watanabe T."/>
            <person name="Sugiyama A."/>
            <person name="Takemoto M."/>
            <person name="Kawakami B."/>
            <person name="Yamazaki M."/>
            <person name="Watanabe K."/>
            <person name="Kumagai A."/>
            <person name="Itakura S."/>
            <person name="Fukuzumi Y."/>
            <person name="Fujimori Y."/>
            <person name="Komiyama M."/>
            <person name="Tashiro H."/>
            <person name="Tanigami A."/>
            <person name="Fujiwara T."/>
            <person name="Ono T."/>
            <person name="Yamada K."/>
            <person name="Fujii Y."/>
            <person name="Ozaki K."/>
            <person name="Hirao M."/>
            <person name="Ohmori Y."/>
            <person name="Kawabata A."/>
            <person name="Hikiji T."/>
            <person name="Kobatake N."/>
            <person name="Inagaki H."/>
            <person name="Ikema Y."/>
            <person name="Okamoto S."/>
            <person name="Okitani R."/>
            <person name="Kawakami T."/>
            <person name="Noguchi S."/>
            <person name="Itoh T."/>
            <person name="Shigeta K."/>
            <person name="Senba T."/>
            <person name="Matsumura K."/>
            <person name="Nakajima Y."/>
            <person name="Mizuno T."/>
            <person name="Morinaga M."/>
            <person name="Sasaki M."/>
            <person name="Togashi T."/>
            <person name="Oyama M."/>
            <person name="Hata H."/>
            <person name="Watanabe M."/>
            <person name="Komatsu T."/>
            <person name="Mizushima-Sugano J."/>
            <person name="Satoh T."/>
            <person name="Shirai Y."/>
            <person name="Takahashi Y."/>
            <person name="Nakagawa K."/>
            <person name="Okumura K."/>
            <person name="Nagase T."/>
            <person name="Nomura N."/>
            <person name="Kikuchi H."/>
            <person name="Masuho Y."/>
            <person name="Yamashita R."/>
            <person name="Nakai K."/>
            <person name="Yada T."/>
            <person name="Nakamura Y."/>
            <person name="Ohara O."/>
            <person name="Isogai T."/>
            <person name="Sugano S."/>
        </authorList>
    </citation>
    <scope>NUCLEOTIDE SEQUENCE [LARGE SCALE MRNA] (ISOFORM 2)</scope>
    <source>
        <tissue>Testis</tissue>
    </source>
</reference>
<reference key="2">
    <citation type="journal article" date="2005" name="Nature">
        <title>The DNA sequence of the human X chromosome.</title>
        <authorList>
            <person name="Ross M.T."/>
            <person name="Grafham D.V."/>
            <person name="Coffey A.J."/>
            <person name="Scherer S."/>
            <person name="McLay K."/>
            <person name="Muzny D."/>
            <person name="Platzer M."/>
            <person name="Howell G.R."/>
            <person name="Burrows C."/>
            <person name="Bird C.P."/>
            <person name="Frankish A."/>
            <person name="Lovell F.L."/>
            <person name="Howe K.L."/>
            <person name="Ashurst J.L."/>
            <person name="Fulton R.S."/>
            <person name="Sudbrak R."/>
            <person name="Wen G."/>
            <person name="Jones M.C."/>
            <person name="Hurles M.E."/>
            <person name="Andrews T.D."/>
            <person name="Scott C.E."/>
            <person name="Searle S."/>
            <person name="Ramser J."/>
            <person name="Whittaker A."/>
            <person name="Deadman R."/>
            <person name="Carter N.P."/>
            <person name="Hunt S.E."/>
            <person name="Chen R."/>
            <person name="Cree A."/>
            <person name="Gunaratne P."/>
            <person name="Havlak P."/>
            <person name="Hodgson A."/>
            <person name="Metzker M.L."/>
            <person name="Richards S."/>
            <person name="Scott G."/>
            <person name="Steffen D."/>
            <person name="Sodergren E."/>
            <person name="Wheeler D.A."/>
            <person name="Worley K.C."/>
            <person name="Ainscough R."/>
            <person name="Ambrose K.D."/>
            <person name="Ansari-Lari M.A."/>
            <person name="Aradhya S."/>
            <person name="Ashwell R.I."/>
            <person name="Babbage A.K."/>
            <person name="Bagguley C.L."/>
            <person name="Ballabio A."/>
            <person name="Banerjee R."/>
            <person name="Barker G.E."/>
            <person name="Barlow K.F."/>
            <person name="Barrett I.P."/>
            <person name="Bates K.N."/>
            <person name="Beare D.M."/>
            <person name="Beasley H."/>
            <person name="Beasley O."/>
            <person name="Beck A."/>
            <person name="Bethel G."/>
            <person name="Blechschmidt K."/>
            <person name="Brady N."/>
            <person name="Bray-Allen S."/>
            <person name="Bridgeman A.M."/>
            <person name="Brown A.J."/>
            <person name="Brown M.J."/>
            <person name="Bonnin D."/>
            <person name="Bruford E.A."/>
            <person name="Buhay C."/>
            <person name="Burch P."/>
            <person name="Burford D."/>
            <person name="Burgess J."/>
            <person name="Burrill W."/>
            <person name="Burton J."/>
            <person name="Bye J.M."/>
            <person name="Carder C."/>
            <person name="Carrel L."/>
            <person name="Chako J."/>
            <person name="Chapman J.C."/>
            <person name="Chavez D."/>
            <person name="Chen E."/>
            <person name="Chen G."/>
            <person name="Chen Y."/>
            <person name="Chen Z."/>
            <person name="Chinault C."/>
            <person name="Ciccodicola A."/>
            <person name="Clark S.Y."/>
            <person name="Clarke G."/>
            <person name="Clee C.M."/>
            <person name="Clegg S."/>
            <person name="Clerc-Blankenburg K."/>
            <person name="Clifford K."/>
            <person name="Cobley V."/>
            <person name="Cole C.G."/>
            <person name="Conquer J.S."/>
            <person name="Corby N."/>
            <person name="Connor R.E."/>
            <person name="David R."/>
            <person name="Davies J."/>
            <person name="Davis C."/>
            <person name="Davis J."/>
            <person name="Delgado O."/>
            <person name="Deshazo D."/>
            <person name="Dhami P."/>
            <person name="Ding Y."/>
            <person name="Dinh H."/>
            <person name="Dodsworth S."/>
            <person name="Draper H."/>
            <person name="Dugan-Rocha S."/>
            <person name="Dunham A."/>
            <person name="Dunn M."/>
            <person name="Durbin K.J."/>
            <person name="Dutta I."/>
            <person name="Eades T."/>
            <person name="Ellwood M."/>
            <person name="Emery-Cohen A."/>
            <person name="Errington H."/>
            <person name="Evans K.L."/>
            <person name="Faulkner L."/>
            <person name="Francis F."/>
            <person name="Frankland J."/>
            <person name="Fraser A.E."/>
            <person name="Galgoczy P."/>
            <person name="Gilbert J."/>
            <person name="Gill R."/>
            <person name="Gloeckner G."/>
            <person name="Gregory S.G."/>
            <person name="Gribble S."/>
            <person name="Griffiths C."/>
            <person name="Grocock R."/>
            <person name="Gu Y."/>
            <person name="Gwilliam R."/>
            <person name="Hamilton C."/>
            <person name="Hart E.A."/>
            <person name="Hawes A."/>
            <person name="Heath P.D."/>
            <person name="Heitmann K."/>
            <person name="Hennig S."/>
            <person name="Hernandez J."/>
            <person name="Hinzmann B."/>
            <person name="Ho S."/>
            <person name="Hoffs M."/>
            <person name="Howden P.J."/>
            <person name="Huckle E.J."/>
            <person name="Hume J."/>
            <person name="Hunt P.J."/>
            <person name="Hunt A.R."/>
            <person name="Isherwood J."/>
            <person name="Jacob L."/>
            <person name="Johnson D."/>
            <person name="Jones S."/>
            <person name="de Jong P.J."/>
            <person name="Joseph S.S."/>
            <person name="Keenan S."/>
            <person name="Kelly S."/>
            <person name="Kershaw J.K."/>
            <person name="Khan Z."/>
            <person name="Kioschis P."/>
            <person name="Klages S."/>
            <person name="Knights A.J."/>
            <person name="Kosiura A."/>
            <person name="Kovar-Smith C."/>
            <person name="Laird G.K."/>
            <person name="Langford C."/>
            <person name="Lawlor S."/>
            <person name="Leversha M."/>
            <person name="Lewis L."/>
            <person name="Liu W."/>
            <person name="Lloyd C."/>
            <person name="Lloyd D.M."/>
            <person name="Loulseged H."/>
            <person name="Loveland J.E."/>
            <person name="Lovell J.D."/>
            <person name="Lozado R."/>
            <person name="Lu J."/>
            <person name="Lyne R."/>
            <person name="Ma J."/>
            <person name="Maheshwari M."/>
            <person name="Matthews L.H."/>
            <person name="McDowall J."/>
            <person name="McLaren S."/>
            <person name="McMurray A."/>
            <person name="Meidl P."/>
            <person name="Meitinger T."/>
            <person name="Milne S."/>
            <person name="Miner G."/>
            <person name="Mistry S.L."/>
            <person name="Morgan M."/>
            <person name="Morris S."/>
            <person name="Mueller I."/>
            <person name="Mullikin J.C."/>
            <person name="Nguyen N."/>
            <person name="Nordsiek G."/>
            <person name="Nyakatura G."/>
            <person name="O'dell C.N."/>
            <person name="Okwuonu G."/>
            <person name="Palmer S."/>
            <person name="Pandian R."/>
            <person name="Parker D."/>
            <person name="Parrish J."/>
            <person name="Pasternak S."/>
            <person name="Patel D."/>
            <person name="Pearce A.V."/>
            <person name="Pearson D.M."/>
            <person name="Pelan S.E."/>
            <person name="Perez L."/>
            <person name="Porter K.M."/>
            <person name="Ramsey Y."/>
            <person name="Reichwald K."/>
            <person name="Rhodes S."/>
            <person name="Ridler K.A."/>
            <person name="Schlessinger D."/>
            <person name="Schueler M.G."/>
            <person name="Sehra H.K."/>
            <person name="Shaw-Smith C."/>
            <person name="Shen H."/>
            <person name="Sheridan E.M."/>
            <person name="Shownkeen R."/>
            <person name="Skuce C.D."/>
            <person name="Smith M.L."/>
            <person name="Sotheran E.C."/>
            <person name="Steingruber H.E."/>
            <person name="Steward C.A."/>
            <person name="Storey R."/>
            <person name="Swann R.M."/>
            <person name="Swarbreck D."/>
            <person name="Tabor P.E."/>
            <person name="Taudien S."/>
            <person name="Taylor T."/>
            <person name="Teague B."/>
            <person name="Thomas K."/>
            <person name="Thorpe A."/>
            <person name="Timms K."/>
            <person name="Tracey A."/>
            <person name="Trevanion S."/>
            <person name="Tromans A.C."/>
            <person name="d'Urso M."/>
            <person name="Verduzco D."/>
            <person name="Villasana D."/>
            <person name="Waldron L."/>
            <person name="Wall M."/>
            <person name="Wang Q."/>
            <person name="Warren J."/>
            <person name="Warry G.L."/>
            <person name="Wei X."/>
            <person name="West A."/>
            <person name="Whitehead S.L."/>
            <person name="Whiteley M.N."/>
            <person name="Wilkinson J.E."/>
            <person name="Willey D.L."/>
            <person name="Williams G."/>
            <person name="Williams L."/>
            <person name="Williamson A."/>
            <person name="Williamson H."/>
            <person name="Wilming L."/>
            <person name="Woodmansey R.L."/>
            <person name="Wray P.W."/>
            <person name="Yen J."/>
            <person name="Zhang J."/>
            <person name="Zhou J."/>
            <person name="Zoghbi H."/>
            <person name="Zorilla S."/>
            <person name="Buck D."/>
            <person name="Reinhardt R."/>
            <person name="Poustka A."/>
            <person name="Rosenthal A."/>
            <person name="Lehrach H."/>
            <person name="Meindl A."/>
            <person name="Minx P.J."/>
            <person name="Hillier L.W."/>
            <person name="Willard H.F."/>
            <person name="Wilson R.K."/>
            <person name="Waterston R.H."/>
            <person name="Rice C.M."/>
            <person name="Vaudin M."/>
            <person name="Coulson A."/>
            <person name="Nelson D.L."/>
            <person name="Weinstock G."/>
            <person name="Sulston J.E."/>
            <person name="Durbin R.M."/>
            <person name="Hubbard T."/>
            <person name="Gibbs R.A."/>
            <person name="Beck S."/>
            <person name="Rogers J."/>
            <person name="Bentley D.R."/>
        </authorList>
    </citation>
    <scope>NUCLEOTIDE SEQUENCE [LARGE SCALE GENOMIC DNA]</scope>
</reference>
<reference key="3">
    <citation type="submission" date="2005-07" db="EMBL/GenBank/DDBJ databases">
        <authorList>
            <person name="Mural R.J."/>
            <person name="Istrail S."/>
            <person name="Sutton G.G."/>
            <person name="Florea L."/>
            <person name="Halpern A.L."/>
            <person name="Mobarry C.M."/>
            <person name="Lippert R."/>
            <person name="Walenz B."/>
            <person name="Shatkay H."/>
            <person name="Dew I."/>
            <person name="Miller J.R."/>
            <person name="Flanigan M.J."/>
            <person name="Edwards N.J."/>
            <person name="Bolanos R."/>
            <person name="Fasulo D."/>
            <person name="Halldorsson B.V."/>
            <person name="Hannenhalli S."/>
            <person name="Turner R."/>
            <person name="Yooseph S."/>
            <person name="Lu F."/>
            <person name="Nusskern D.R."/>
            <person name="Shue B.C."/>
            <person name="Zheng X.H."/>
            <person name="Zhong F."/>
            <person name="Delcher A.L."/>
            <person name="Huson D.H."/>
            <person name="Kravitz S.A."/>
            <person name="Mouchard L."/>
            <person name="Reinert K."/>
            <person name="Remington K.A."/>
            <person name="Clark A.G."/>
            <person name="Waterman M.S."/>
            <person name="Eichler E.E."/>
            <person name="Adams M.D."/>
            <person name="Hunkapiller M.W."/>
            <person name="Myers E.W."/>
            <person name="Venter J.C."/>
        </authorList>
    </citation>
    <scope>NUCLEOTIDE SEQUENCE [LARGE SCALE GENOMIC DNA]</scope>
</reference>
<comment type="alternative products">
    <event type="alternative splicing"/>
    <isoform>
        <id>B4DZS4-1</id>
        <name>1</name>
        <sequence type="displayed"/>
    </isoform>
    <isoform>
        <id>B4DZS4-2</id>
        <name>2</name>
        <sequence type="described" ref="VSP_062037 VSP_062038"/>
    </isoform>
</comment>
<comment type="miscellaneous">
    <molecule>Isoform 2</molecule>
    <text evidence="2">Probable target of nonsense-mediated mRNA decay.</text>
</comment>
<comment type="similarity">
    <text evidence="2">Belongs to the TCP11 family.</text>
</comment>
<sequence length="502" mass="56880">MPKTEETVLQNDPSVAENGAPEPKTPGQSQKSKSFCLDDQSPDLIETVNEVSKLSISHEIVVNQDFYVEETILPPNSVEGRFAEAMYNAFWNHLKEQLLSTPPDFTCALELLKDVKETLLSLLLPWQNRLRNEIEEALDTDLLKQEAEHGALDVPHLSNYILNLMALLCAPVRDEAIQKLETIRDPVQLLRGILRVLGLMKMDMVNYTIQSFRPYLQEHSIQYEQAKFQELLDKQPSLLDYTTKWLTKAATDITTLCPSSPDSPSSSCSMVCSLPSGAGNNSEPPSPTMVLYQGYLNLLLWDLENVEFPETLLMDRIRLQELAFQLHQLTVLASVLLVARSFSGEVLFRSPEFVDRLKCTTKALTEEFISRPEETMLSVSEQVSQEVHQGLKDMGLTTLSSENTASLLGQLQNITKKENCIRSIVDQWIRFFLKCCLLHGMQESLLHFPGGLILIEKELAELGWKFLNLMHHNQQVFGPYYAEILKHIIHPAQAQETDVEPN</sequence>
<dbReference type="EMBL" id="AK303069">
    <property type="protein sequence ID" value="BAG64186.1"/>
    <property type="molecule type" value="mRNA"/>
</dbReference>
<dbReference type="EMBL" id="AC234791">
    <property type="status" value="NOT_ANNOTATED_CDS"/>
    <property type="molecule type" value="Genomic_DNA"/>
</dbReference>
<dbReference type="EMBL" id="CH471190">
    <property type="protein sequence ID" value="EAW54741.1"/>
    <property type="molecule type" value="Genomic_DNA"/>
</dbReference>
<dbReference type="RefSeq" id="NP_001391955.1">
    <molecule id="B4DZS4-1"/>
    <property type="nucleotide sequence ID" value="NM_001405026.1"/>
</dbReference>
<dbReference type="RefSeq" id="XP_016885499.1">
    <property type="nucleotide sequence ID" value="XM_017030010.1"/>
</dbReference>
<dbReference type="GlyGen" id="B4DZS4">
    <property type="glycosylation" value="1 site"/>
</dbReference>
<dbReference type="BioMuta" id="HGNC:48369"/>
<dbReference type="Ensembl" id="ENST00000622971.4">
    <molecule id="B4DZS4-1"/>
    <property type="protein sequence ID" value="ENSP00000494553.1"/>
    <property type="gene ID" value="ENSG00000268235.9"/>
</dbReference>
<dbReference type="GeneID" id="100996631"/>
<dbReference type="MANE-Select" id="ENST00000622971.4">
    <property type="protein sequence ID" value="ENSP00000494553.1"/>
    <property type="RefSeq nucleotide sequence ID" value="NM_001405026.1"/>
    <property type="RefSeq protein sequence ID" value="NP_001391955.1"/>
</dbReference>
<dbReference type="AGR" id="HGNC:48369"/>
<dbReference type="GeneCards" id="TCP11X1"/>
<dbReference type="HGNC" id="HGNC:48369">
    <property type="gene designation" value="TCP11X1"/>
</dbReference>
<dbReference type="neXtProt" id="NX_B4DZS4"/>
<dbReference type="VEuPathDB" id="HostDB:ENSG00000215029"/>
<dbReference type="VEuPathDB" id="HostDB:ENSG00000268235"/>
<dbReference type="GeneTree" id="ENSGT00940000160792"/>
<dbReference type="InParanoid" id="B4DZS4"/>
<dbReference type="OMA" id="QIVMCAS"/>
<dbReference type="OrthoDB" id="276323at2759"/>
<dbReference type="PAN-GO" id="B4DZS4">
    <property type="GO annotations" value="4 GO annotations based on evolutionary models"/>
</dbReference>
<dbReference type="PhylomeDB" id="B4DZS4"/>
<dbReference type="Pharos" id="B4DZS4">
    <property type="development level" value="Tdark"/>
</dbReference>
<dbReference type="PRO" id="PR:B4DZS4"/>
<dbReference type="Proteomes" id="UP000005640">
    <property type="component" value="Chromosome X"/>
</dbReference>
<dbReference type="RNAct" id="B4DZS4">
    <property type="molecule type" value="protein"/>
</dbReference>
<dbReference type="Bgee" id="ENSG00000268235">
    <property type="expression patterns" value="Expressed in primordial germ cell in gonad and 15 other cell types or tissues"/>
</dbReference>
<dbReference type="ExpressionAtlas" id="B4DZS4">
    <property type="expression patterns" value="baseline and differential"/>
</dbReference>
<dbReference type="GO" id="GO:0001669">
    <property type="term" value="C:acrosomal vesicle"/>
    <property type="evidence" value="ECO:0000318"/>
    <property type="project" value="GO_Central"/>
</dbReference>
<dbReference type="GO" id="GO:0036126">
    <property type="term" value="C:sperm flagellum"/>
    <property type="evidence" value="ECO:0000318"/>
    <property type="project" value="GO_Central"/>
</dbReference>
<dbReference type="GO" id="GO:0010737">
    <property type="term" value="P:protein kinase A signaling"/>
    <property type="evidence" value="ECO:0000318"/>
    <property type="project" value="GO_Central"/>
</dbReference>
<dbReference type="GO" id="GO:1902490">
    <property type="term" value="P:regulation of sperm capacitation"/>
    <property type="evidence" value="ECO:0000318"/>
    <property type="project" value="GO_Central"/>
</dbReference>
<dbReference type="InterPro" id="IPR008862">
    <property type="entry name" value="Tcp11"/>
</dbReference>
<dbReference type="PANTHER" id="PTHR12832:SF21">
    <property type="entry name" value="T-COMPLEX PROTEIN 11 X-LINKED PROTEIN 1-RELATED"/>
    <property type="match status" value="1"/>
</dbReference>
<dbReference type="PANTHER" id="PTHR12832">
    <property type="entry name" value="TESTIS-SPECIFIC PROTEIN PBS13 T-COMPLEX 11"/>
    <property type="match status" value="1"/>
</dbReference>
<dbReference type="Pfam" id="PF05794">
    <property type="entry name" value="Tcp11"/>
    <property type="match status" value="1"/>
</dbReference>
<accession>B4DZS4</accession>
<accession>A0A2R8YDF9</accession>